<reference evidence="4" key="1">
    <citation type="journal article" date="2000" name="Biochem. Biophys. Res. Commun.">
        <title>Potent heterologous antifungal proteins from cheeseweed (Malva parviflora).</title>
        <authorList>
            <person name="Wang X."/>
            <person name="Bunkers G.J."/>
        </authorList>
    </citation>
    <scope>PROTEIN SEQUENCE</scope>
    <scope>FUNCTION</scope>
    <source>
        <tissue>Seed</tissue>
    </source>
</reference>
<organism evidence="4">
    <name type="scientific">Malva parviflora</name>
    <name type="common">Little mallow</name>
    <name type="synonym">Cheeseweed mallow</name>
    <dbReference type="NCBI Taxonomy" id="145753"/>
    <lineage>
        <taxon>Eukaryota</taxon>
        <taxon>Viridiplantae</taxon>
        <taxon>Streptophyta</taxon>
        <taxon>Embryophyta</taxon>
        <taxon>Tracheophyta</taxon>
        <taxon>Spermatophyta</taxon>
        <taxon>Magnoliopsida</taxon>
        <taxon>eudicotyledons</taxon>
        <taxon>Gunneridae</taxon>
        <taxon>Pentapetalae</taxon>
        <taxon>rosids</taxon>
        <taxon>malvids</taxon>
        <taxon>Malvales</taxon>
        <taxon>Malvaceae</taxon>
        <taxon>Malvoideae</taxon>
        <taxon>Malva</taxon>
    </lineage>
</organism>
<feature type="chain" id="PRO_0000064480" description="Antifungal protein 2 large subunit">
    <location>
        <begin position="1"/>
        <end position="20" status="greater than"/>
    </location>
</feature>
<feature type="region of interest" description="Disordered" evidence="1">
    <location>
        <begin position="1"/>
        <end position="20"/>
    </location>
</feature>
<feature type="non-terminal residue" evidence="3">
    <location>
        <position position="20"/>
    </location>
</feature>
<sequence length="20" mass="2606">PEDPQRRYQEXQREXRXQQE</sequence>
<comment type="function">
    <text evidence="2">Possesses antifungal activity against P.infestans but not F.graminearum.</text>
</comment>
<comment type="subunit">
    <text evidence="2">Heterodimer of a large and a small subunit.</text>
</comment>
<comment type="miscellaneous">
    <text evidence="2">Antimicrobial activity is not affected by salt concentration.</text>
</comment>
<accession>P83143</accession>
<dbReference type="GO" id="GO:0042742">
    <property type="term" value="P:defense response to bacterium"/>
    <property type="evidence" value="ECO:0007669"/>
    <property type="project" value="UniProtKB-KW"/>
</dbReference>
<dbReference type="GO" id="GO:0050832">
    <property type="term" value="P:defense response to fungus"/>
    <property type="evidence" value="ECO:0000314"/>
    <property type="project" value="UniProtKB"/>
</dbReference>
<dbReference type="GO" id="GO:0031640">
    <property type="term" value="P:killing of cells of another organism"/>
    <property type="evidence" value="ECO:0007669"/>
    <property type="project" value="UniProtKB-KW"/>
</dbReference>
<dbReference type="GO" id="GO:0006805">
    <property type="term" value="P:xenobiotic metabolic process"/>
    <property type="evidence" value="ECO:0000314"/>
    <property type="project" value="UniProtKB"/>
</dbReference>
<keyword id="KW-0044">Antibiotic</keyword>
<keyword id="KW-0929">Antimicrobial</keyword>
<keyword id="KW-0903">Direct protein sequencing</keyword>
<keyword id="KW-0295">Fungicide</keyword>
<evidence type="ECO:0000256" key="1">
    <source>
        <dbReference type="SAM" id="MobiDB-lite"/>
    </source>
</evidence>
<evidence type="ECO:0000269" key="2">
    <source>
    </source>
</evidence>
<evidence type="ECO:0000303" key="3">
    <source>
    </source>
</evidence>
<evidence type="ECO:0000305" key="4"/>
<protein>
    <recommendedName>
        <fullName>Antifungal protein 2 large subunit</fullName>
    </recommendedName>
    <alternativeName>
        <fullName>CW-2</fullName>
    </alternativeName>
</protein>
<name>AFP2L_MALPA</name>
<proteinExistence type="evidence at protein level"/>